<feature type="chain" id="PRO_1000139203" description="Bifunctional protein PyrR">
    <location>
        <begin position="1"/>
        <end position="182"/>
    </location>
</feature>
<feature type="short sequence motif" description="PRPP-binding" evidence="1">
    <location>
        <begin position="100"/>
        <end position="112"/>
    </location>
</feature>
<gene>
    <name evidence="1" type="primary">pyrR</name>
    <name type="ordered locus">Nther_2766</name>
</gene>
<proteinExistence type="inferred from homology"/>
<comment type="function">
    <text evidence="1">Regulates transcriptional attenuation of the pyrimidine nucleotide (pyr) operon by binding in a uridine-dependent manner to specific sites on pyr mRNA. This disrupts an antiterminator hairpin in the RNA and favors formation of a downstream transcription terminator, leading to a reduced expression of downstream genes.</text>
</comment>
<comment type="function">
    <text evidence="1">Also displays a weak uracil phosphoribosyltransferase activity which is not physiologically significant.</text>
</comment>
<comment type="catalytic activity">
    <reaction evidence="1">
        <text>UMP + diphosphate = 5-phospho-alpha-D-ribose 1-diphosphate + uracil</text>
        <dbReference type="Rhea" id="RHEA:13017"/>
        <dbReference type="ChEBI" id="CHEBI:17568"/>
        <dbReference type="ChEBI" id="CHEBI:33019"/>
        <dbReference type="ChEBI" id="CHEBI:57865"/>
        <dbReference type="ChEBI" id="CHEBI:58017"/>
        <dbReference type="EC" id="2.4.2.9"/>
    </reaction>
</comment>
<comment type="subunit">
    <text evidence="1">Homodimer and homohexamer; in equilibrium.</text>
</comment>
<comment type="similarity">
    <text evidence="1">Belongs to the purine/pyrimidine phosphoribosyltransferase family. PyrR subfamily.</text>
</comment>
<dbReference type="EC" id="2.4.2.9" evidence="1"/>
<dbReference type="EMBL" id="CP001034">
    <property type="protein sequence ID" value="ACB86316.1"/>
    <property type="molecule type" value="Genomic_DNA"/>
</dbReference>
<dbReference type="RefSeq" id="WP_012449150.1">
    <property type="nucleotide sequence ID" value="NC_010718.1"/>
</dbReference>
<dbReference type="SMR" id="B2A2U8"/>
<dbReference type="FunCoup" id="B2A2U8">
    <property type="interactions" value="192"/>
</dbReference>
<dbReference type="STRING" id="457570.Nther_2766"/>
<dbReference type="KEGG" id="nth:Nther_2766"/>
<dbReference type="eggNOG" id="COG2065">
    <property type="taxonomic scope" value="Bacteria"/>
</dbReference>
<dbReference type="HOGENOM" id="CLU_094234_2_1_9"/>
<dbReference type="InParanoid" id="B2A2U8"/>
<dbReference type="OrthoDB" id="9802227at2"/>
<dbReference type="Proteomes" id="UP000001683">
    <property type="component" value="Chromosome"/>
</dbReference>
<dbReference type="GO" id="GO:0003723">
    <property type="term" value="F:RNA binding"/>
    <property type="evidence" value="ECO:0007669"/>
    <property type="project" value="UniProtKB-UniRule"/>
</dbReference>
<dbReference type="GO" id="GO:0004845">
    <property type="term" value="F:uracil phosphoribosyltransferase activity"/>
    <property type="evidence" value="ECO:0007669"/>
    <property type="project" value="UniProtKB-UniRule"/>
</dbReference>
<dbReference type="GO" id="GO:0006353">
    <property type="term" value="P:DNA-templated transcription termination"/>
    <property type="evidence" value="ECO:0007669"/>
    <property type="project" value="UniProtKB-UniRule"/>
</dbReference>
<dbReference type="CDD" id="cd06223">
    <property type="entry name" value="PRTases_typeI"/>
    <property type="match status" value="1"/>
</dbReference>
<dbReference type="FunFam" id="3.40.50.2020:FF:000020">
    <property type="entry name" value="Bifunctional protein PyrR"/>
    <property type="match status" value="1"/>
</dbReference>
<dbReference type="Gene3D" id="3.40.50.2020">
    <property type="match status" value="1"/>
</dbReference>
<dbReference type="HAMAP" id="MF_01219">
    <property type="entry name" value="PyrR"/>
    <property type="match status" value="1"/>
</dbReference>
<dbReference type="InterPro" id="IPR000836">
    <property type="entry name" value="PRibTrfase_dom"/>
</dbReference>
<dbReference type="InterPro" id="IPR029057">
    <property type="entry name" value="PRTase-like"/>
</dbReference>
<dbReference type="InterPro" id="IPR023050">
    <property type="entry name" value="PyrR"/>
</dbReference>
<dbReference type="InterPro" id="IPR050137">
    <property type="entry name" value="PyrR_bifunctional"/>
</dbReference>
<dbReference type="NCBIfam" id="NF003545">
    <property type="entry name" value="PRK05205.1-1"/>
    <property type="match status" value="1"/>
</dbReference>
<dbReference type="NCBIfam" id="NF003547">
    <property type="entry name" value="PRK05205.1-3"/>
    <property type="match status" value="1"/>
</dbReference>
<dbReference type="NCBIfam" id="NF003548">
    <property type="entry name" value="PRK05205.1-4"/>
    <property type="match status" value="1"/>
</dbReference>
<dbReference type="NCBIfam" id="NF003549">
    <property type="entry name" value="PRK05205.1-5"/>
    <property type="match status" value="1"/>
</dbReference>
<dbReference type="PANTHER" id="PTHR11608">
    <property type="entry name" value="BIFUNCTIONAL PROTEIN PYRR"/>
    <property type="match status" value="1"/>
</dbReference>
<dbReference type="PANTHER" id="PTHR11608:SF0">
    <property type="entry name" value="BIFUNCTIONAL PROTEIN PYRR"/>
    <property type="match status" value="1"/>
</dbReference>
<dbReference type="Pfam" id="PF00156">
    <property type="entry name" value="Pribosyltran"/>
    <property type="match status" value="1"/>
</dbReference>
<dbReference type="SUPFAM" id="SSF53271">
    <property type="entry name" value="PRTase-like"/>
    <property type="match status" value="1"/>
</dbReference>
<protein>
    <recommendedName>
        <fullName evidence="1">Bifunctional protein PyrR</fullName>
    </recommendedName>
    <domain>
        <recommendedName>
            <fullName evidence="1">Pyrimidine operon regulatory protein</fullName>
        </recommendedName>
    </domain>
    <domain>
        <recommendedName>
            <fullName evidence="1">Uracil phosphoribosyltransferase</fullName>
            <shortName evidence="1">UPRTase</shortName>
            <ecNumber evidence="1">2.4.2.9</ecNumber>
        </recommendedName>
    </domain>
</protein>
<accession>B2A2U8</accession>
<evidence type="ECO:0000255" key="1">
    <source>
        <dbReference type="HAMAP-Rule" id="MF_01219"/>
    </source>
</evidence>
<organism>
    <name type="scientific">Natranaerobius thermophilus (strain ATCC BAA-1301 / DSM 18059 / JW/NM-WN-LF)</name>
    <dbReference type="NCBI Taxonomy" id="457570"/>
    <lineage>
        <taxon>Bacteria</taxon>
        <taxon>Bacillati</taxon>
        <taxon>Bacillota</taxon>
        <taxon>Clostridia</taxon>
        <taxon>Natranaerobiales</taxon>
        <taxon>Natranaerobiaceae</taxon>
        <taxon>Natranaerobius</taxon>
    </lineage>
</organism>
<reference key="1">
    <citation type="submission" date="2008-04" db="EMBL/GenBank/DDBJ databases">
        <title>Complete sequence of chromosome of Natranaerobius thermophilus JW/NM-WN-LF.</title>
        <authorList>
            <consortium name="US DOE Joint Genome Institute"/>
            <person name="Copeland A."/>
            <person name="Lucas S."/>
            <person name="Lapidus A."/>
            <person name="Glavina del Rio T."/>
            <person name="Dalin E."/>
            <person name="Tice H."/>
            <person name="Bruce D."/>
            <person name="Goodwin L."/>
            <person name="Pitluck S."/>
            <person name="Chertkov O."/>
            <person name="Brettin T."/>
            <person name="Detter J.C."/>
            <person name="Han C."/>
            <person name="Kuske C.R."/>
            <person name="Schmutz J."/>
            <person name="Larimer F."/>
            <person name="Land M."/>
            <person name="Hauser L."/>
            <person name="Kyrpides N."/>
            <person name="Lykidis A."/>
            <person name="Mesbah N.M."/>
            <person name="Wiegel J."/>
        </authorList>
    </citation>
    <scope>NUCLEOTIDE SEQUENCE [LARGE SCALE GENOMIC DNA]</scope>
    <source>
        <strain>ATCC BAA-1301 / DSM 18059 / JW/NM-WN-LF</strain>
    </source>
</reference>
<sequence>MVQEKAEIMDQEKFNRTLTRISHEIIEKNKGIDDLVLIGIRTRGVPLAERLAHKIEEIEGESIATGLLDITLYRDDLSTLSEKPILNKTEVPFSIKNKKVVLVDDVLYTGRTARAALDAVIDLGRPKYIQLAVIVDRGHRELPIRADYVGKNVPTSKKELISVRLSEIDGEDRVMIEETVKE</sequence>
<name>PYRR_NATTJ</name>
<keyword id="KW-0328">Glycosyltransferase</keyword>
<keyword id="KW-1185">Reference proteome</keyword>
<keyword id="KW-0694">RNA-binding</keyword>
<keyword id="KW-0804">Transcription</keyword>
<keyword id="KW-0805">Transcription regulation</keyword>
<keyword id="KW-0806">Transcription termination</keyword>
<keyword id="KW-0808">Transferase</keyword>